<protein>
    <recommendedName>
        <fullName evidence="1">LexA repressor</fullName>
        <ecNumber evidence="1">3.4.21.88</ecNumber>
    </recommendedName>
</protein>
<proteinExistence type="inferred from homology"/>
<dbReference type="EC" id="3.4.21.88" evidence="1"/>
<dbReference type="EMBL" id="AE005674">
    <property type="protein sequence ID" value="AAN45584.1"/>
    <property type="molecule type" value="Genomic_DNA"/>
</dbReference>
<dbReference type="EMBL" id="AE014073">
    <property type="protein sequence ID" value="AAP18615.1"/>
    <property type="molecule type" value="Genomic_DNA"/>
</dbReference>
<dbReference type="RefSeq" id="NP_709877.1">
    <property type="nucleotide sequence ID" value="NC_004337.2"/>
</dbReference>
<dbReference type="RefSeq" id="WP_000646078.1">
    <property type="nucleotide sequence ID" value="NZ_WPGW01000150.1"/>
</dbReference>
<dbReference type="SMR" id="P0A7C5"/>
<dbReference type="STRING" id="198214.SF4162"/>
<dbReference type="MEROPS" id="S24.001"/>
<dbReference type="PaxDb" id="198214-SF4162"/>
<dbReference type="GeneID" id="1025656"/>
<dbReference type="GeneID" id="93777788"/>
<dbReference type="KEGG" id="sfl:SF4162"/>
<dbReference type="KEGG" id="sfx:S3569"/>
<dbReference type="PATRIC" id="fig|198214.7.peg.4910"/>
<dbReference type="HOGENOM" id="CLU_066192_45_3_6"/>
<dbReference type="Proteomes" id="UP000001006">
    <property type="component" value="Chromosome"/>
</dbReference>
<dbReference type="Proteomes" id="UP000002673">
    <property type="component" value="Chromosome"/>
</dbReference>
<dbReference type="GO" id="GO:0003677">
    <property type="term" value="F:DNA binding"/>
    <property type="evidence" value="ECO:0007669"/>
    <property type="project" value="UniProtKB-UniRule"/>
</dbReference>
<dbReference type="GO" id="GO:0004252">
    <property type="term" value="F:serine-type endopeptidase activity"/>
    <property type="evidence" value="ECO:0007669"/>
    <property type="project" value="UniProtKB-UniRule"/>
</dbReference>
<dbReference type="GO" id="GO:0006281">
    <property type="term" value="P:DNA repair"/>
    <property type="evidence" value="ECO:0007669"/>
    <property type="project" value="UniProtKB-UniRule"/>
</dbReference>
<dbReference type="GO" id="GO:0006260">
    <property type="term" value="P:DNA replication"/>
    <property type="evidence" value="ECO:0007669"/>
    <property type="project" value="UniProtKB-UniRule"/>
</dbReference>
<dbReference type="GO" id="GO:0045892">
    <property type="term" value="P:negative regulation of DNA-templated transcription"/>
    <property type="evidence" value="ECO:0007669"/>
    <property type="project" value="UniProtKB-UniRule"/>
</dbReference>
<dbReference type="GO" id="GO:0006508">
    <property type="term" value="P:proteolysis"/>
    <property type="evidence" value="ECO:0007669"/>
    <property type="project" value="InterPro"/>
</dbReference>
<dbReference type="GO" id="GO:0009432">
    <property type="term" value="P:SOS response"/>
    <property type="evidence" value="ECO:0007669"/>
    <property type="project" value="UniProtKB-UniRule"/>
</dbReference>
<dbReference type="CDD" id="cd06529">
    <property type="entry name" value="S24_LexA-like"/>
    <property type="match status" value="1"/>
</dbReference>
<dbReference type="FunFam" id="1.10.10.10:FF:000009">
    <property type="entry name" value="LexA repressor"/>
    <property type="match status" value="1"/>
</dbReference>
<dbReference type="FunFam" id="2.10.109.10:FF:000001">
    <property type="entry name" value="LexA repressor"/>
    <property type="match status" value="1"/>
</dbReference>
<dbReference type="Gene3D" id="2.10.109.10">
    <property type="entry name" value="Umud Fragment, subunit A"/>
    <property type="match status" value="1"/>
</dbReference>
<dbReference type="Gene3D" id="1.10.10.10">
    <property type="entry name" value="Winged helix-like DNA-binding domain superfamily/Winged helix DNA-binding domain"/>
    <property type="match status" value="1"/>
</dbReference>
<dbReference type="HAMAP" id="MF_00015">
    <property type="entry name" value="LexA"/>
    <property type="match status" value="1"/>
</dbReference>
<dbReference type="InterPro" id="IPR006200">
    <property type="entry name" value="LexA"/>
</dbReference>
<dbReference type="InterPro" id="IPR039418">
    <property type="entry name" value="LexA-like"/>
</dbReference>
<dbReference type="InterPro" id="IPR036286">
    <property type="entry name" value="LexA/Signal_pep-like_sf"/>
</dbReference>
<dbReference type="InterPro" id="IPR006199">
    <property type="entry name" value="LexA_DNA-bd_dom"/>
</dbReference>
<dbReference type="InterPro" id="IPR050077">
    <property type="entry name" value="LexA_repressor"/>
</dbReference>
<dbReference type="InterPro" id="IPR006197">
    <property type="entry name" value="Peptidase_S24_LexA"/>
</dbReference>
<dbReference type="InterPro" id="IPR015927">
    <property type="entry name" value="Peptidase_S24_S26A/B/C"/>
</dbReference>
<dbReference type="InterPro" id="IPR036388">
    <property type="entry name" value="WH-like_DNA-bd_sf"/>
</dbReference>
<dbReference type="InterPro" id="IPR036390">
    <property type="entry name" value="WH_DNA-bd_sf"/>
</dbReference>
<dbReference type="NCBIfam" id="TIGR00498">
    <property type="entry name" value="lexA"/>
    <property type="match status" value="1"/>
</dbReference>
<dbReference type="PANTHER" id="PTHR33516">
    <property type="entry name" value="LEXA REPRESSOR"/>
    <property type="match status" value="1"/>
</dbReference>
<dbReference type="PANTHER" id="PTHR33516:SF2">
    <property type="entry name" value="LEXA REPRESSOR-RELATED"/>
    <property type="match status" value="1"/>
</dbReference>
<dbReference type="Pfam" id="PF01726">
    <property type="entry name" value="LexA_DNA_bind"/>
    <property type="match status" value="1"/>
</dbReference>
<dbReference type="Pfam" id="PF00717">
    <property type="entry name" value="Peptidase_S24"/>
    <property type="match status" value="1"/>
</dbReference>
<dbReference type="PRINTS" id="PR00726">
    <property type="entry name" value="LEXASERPTASE"/>
</dbReference>
<dbReference type="SUPFAM" id="SSF51306">
    <property type="entry name" value="LexA/Signal peptidase"/>
    <property type="match status" value="1"/>
</dbReference>
<dbReference type="SUPFAM" id="SSF46785">
    <property type="entry name" value="Winged helix' DNA-binding domain"/>
    <property type="match status" value="1"/>
</dbReference>
<sequence length="202" mass="22358">MKALTARQQEVFDLIRDHISQTGMPPTRAEIAQRLGFRSPNAAEEHLKALARKGVIEIVSGASRGIRLLQEEEEGLPLVGRVAAGEPLLAQQHIEGHYQVDPSLFKPNADFLLRVSGMSMKDIGIMDGDLLAVHKTQDVRNGQVVVARIDDEVTVKRLKKQGNKVELLPENSEFKPIVVDLRQQSFTIEGLAVGVIRNGDWL</sequence>
<feature type="chain" id="PRO_0000170085" description="LexA repressor">
    <location>
        <begin position="1"/>
        <end position="202"/>
    </location>
</feature>
<feature type="DNA-binding region" description="H-T-H motif" evidence="1">
    <location>
        <begin position="28"/>
        <end position="48"/>
    </location>
</feature>
<feature type="active site" description="For autocatalytic cleavage activity" evidence="1">
    <location>
        <position position="119"/>
    </location>
</feature>
<feature type="active site" description="For autocatalytic cleavage activity" evidence="1">
    <location>
        <position position="156"/>
    </location>
</feature>
<feature type="site" description="Cleavage; by autolysis" evidence="1">
    <location>
        <begin position="84"/>
        <end position="85"/>
    </location>
</feature>
<gene>
    <name evidence="1" type="primary">lexA</name>
    <name type="ordered locus">SF4162</name>
    <name type="ordered locus">S3569</name>
</gene>
<comment type="function">
    <text evidence="1">Represses a number of genes involved in the response to DNA damage (SOS response), including recA and lexA. Binds to the 16 bp palindromic sequence 5'-CTGTATATATATACAG-3'. In the presence of single-stranded DNA, RecA interacts with LexA causing an autocatalytic cleavage which disrupts the DNA-binding part of LexA, leading to derepression of the SOS regulon and eventually DNA repair.</text>
</comment>
<comment type="catalytic activity">
    <reaction evidence="1">
        <text>Hydrolysis of Ala-|-Gly bond in repressor LexA.</text>
        <dbReference type="EC" id="3.4.21.88"/>
    </reaction>
</comment>
<comment type="subunit">
    <text evidence="1">Homodimer.</text>
</comment>
<comment type="similarity">
    <text evidence="1">Belongs to the peptidase S24 family.</text>
</comment>
<evidence type="ECO:0000255" key="1">
    <source>
        <dbReference type="HAMAP-Rule" id="MF_00015"/>
    </source>
</evidence>
<keyword id="KW-0068">Autocatalytic cleavage</keyword>
<keyword id="KW-0227">DNA damage</keyword>
<keyword id="KW-0234">DNA repair</keyword>
<keyword id="KW-0235">DNA replication</keyword>
<keyword id="KW-0238">DNA-binding</keyword>
<keyword id="KW-0378">Hydrolase</keyword>
<keyword id="KW-1185">Reference proteome</keyword>
<keyword id="KW-0678">Repressor</keyword>
<keyword id="KW-0742">SOS response</keyword>
<keyword id="KW-0804">Transcription</keyword>
<keyword id="KW-0805">Transcription regulation</keyword>
<name>LEXA_SHIFL</name>
<organism>
    <name type="scientific">Shigella flexneri</name>
    <dbReference type="NCBI Taxonomy" id="623"/>
    <lineage>
        <taxon>Bacteria</taxon>
        <taxon>Pseudomonadati</taxon>
        <taxon>Pseudomonadota</taxon>
        <taxon>Gammaproteobacteria</taxon>
        <taxon>Enterobacterales</taxon>
        <taxon>Enterobacteriaceae</taxon>
        <taxon>Shigella</taxon>
    </lineage>
</organism>
<reference key="1">
    <citation type="journal article" date="2002" name="Nucleic Acids Res.">
        <title>Genome sequence of Shigella flexneri 2a: insights into pathogenicity through comparison with genomes of Escherichia coli K12 and O157.</title>
        <authorList>
            <person name="Jin Q."/>
            <person name="Yuan Z."/>
            <person name="Xu J."/>
            <person name="Wang Y."/>
            <person name="Shen Y."/>
            <person name="Lu W."/>
            <person name="Wang J."/>
            <person name="Liu H."/>
            <person name="Yang J."/>
            <person name="Yang F."/>
            <person name="Zhang X."/>
            <person name="Zhang J."/>
            <person name="Yang G."/>
            <person name="Wu H."/>
            <person name="Qu D."/>
            <person name="Dong J."/>
            <person name="Sun L."/>
            <person name="Xue Y."/>
            <person name="Zhao A."/>
            <person name="Gao Y."/>
            <person name="Zhu J."/>
            <person name="Kan B."/>
            <person name="Ding K."/>
            <person name="Chen S."/>
            <person name="Cheng H."/>
            <person name="Yao Z."/>
            <person name="He B."/>
            <person name="Chen R."/>
            <person name="Ma D."/>
            <person name="Qiang B."/>
            <person name="Wen Y."/>
            <person name="Hou Y."/>
            <person name="Yu J."/>
        </authorList>
    </citation>
    <scope>NUCLEOTIDE SEQUENCE [LARGE SCALE GENOMIC DNA]</scope>
    <source>
        <strain>301 / Serotype 2a</strain>
    </source>
</reference>
<reference key="2">
    <citation type="journal article" date="2003" name="Infect. Immun.">
        <title>Complete genome sequence and comparative genomics of Shigella flexneri serotype 2a strain 2457T.</title>
        <authorList>
            <person name="Wei J."/>
            <person name="Goldberg M.B."/>
            <person name="Burland V."/>
            <person name="Venkatesan M.M."/>
            <person name="Deng W."/>
            <person name="Fournier G."/>
            <person name="Mayhew G.F."/>
            <person name="Plunkett G. III"/>
            <person name="Rose D.J."/>
            <person name="Darling A."/>
            <person name="Mau B."/>
            <person name="Perna N.T."/>
            <person name="Payne S.M."/>
            <person name="Runyen-Janecky L.J."/>
            <person name="Zhou S."/>
            <person name="Schwartz D.C."/>
            <person name="Blattner F.R."/>
        </authorList>
    </citation>
    <scope>NUCLEOTIDE SEQUENCE [LARGE SCALE GENOMIC DNA]</scope>
    <source>
        <strain>ATCC 700930 / 2457T / Serotype 2a</strain>
    </source>
</reference>
<accession>P0A7C5</accession>
<accession>P03033</accession>